<feature type="chain" id="PRO_0000182489" description="Heat-inducible transcription repressor HrcA">
    <location>
        <begin position="1"/>
        <end position="347"/>
    </location>
</feature>
<organism>
    <name type="scientific">Lactiplantibacillus plantarum (strain ATCC BAA-793 / NCIMB 8826 / WCFS1)</name>
    <name type="common">Lactobacillus plantarum</name>
    <dbReference type="NCBI Taxonomy" id="220668"/>
    <lineage>
        <taxon>Bacteria</taxon>
        <taxon>Bacillati</taxon>
        <taxon>Bacillota</taxon>
        <taxon>Bacilli</taxon>
        <taxon>Lactobacillales</taxon>
        <taxon>Lactobacillaceae</taxon>
        <taxon>Lactiplantibacillus</taxon>
    </lineage>
</organism>
<keyword id="KW-1185">Reference proteome</keyword>
<keyword id="KW-0678">Repressor</keyword>
<keyword id="KW-0346">Stress response</keyword>
<keyword id="KW-0804">Transcription</keyword>
<keyword id="KW-0805">Transcription regulation</keyword>
<dbReference type="EMBL" id="AL935263">
    <property type="protein sequence ID" value="CCC79275.1"/>
    <property type="molecule type" value="Genomic_DNA"/>
</dbReference>
<dbReference type="RefSeq" id="WP_003640713.1">
    <property type="nucleotide sequence ID" value="NC_004567.2"/>
</dbReference>
<dbReference type="RefSeq" id="YP_004889789.1">
    <property type="nucleotide sequence ID" value="NC_004567.2"/>
</dbReference>
<dbReference type="SMR" id="Q88VL8"/>
<dbReference type="STRING" id="220668.lp_2029"/>
<dbReference type="EnsemblBacteria" id="CCC79275">
    <property type="protein sequence ID" value="CCC79275"/>
    <property type="gene ID" value="lp_2029"/>
</dbReference>
<dbReference type="GeneID" id="77218351"/>
<dbReference type="KEGG" id="lpl:lp_2029"/>
<dbReference type="PATRIC" id="fig|220668.9.peg.1714"/>
<dbReference type="eggNOG" id="COG1420">
    <property type="taxonomic scope" value="Bacteria"/>
</dbReference>
<dbReference type="HOGENOM" id="CLU_050019_1_0_9"/>
<dbReference type="OrthoDB" id="9783139at2"/>
<dbReference type="PhylomeDB" id="Q88VL8"/>
<dbReference type="Proteomes" id="UP000000432">
    <property type="component" value="Chromosome"/>
</dbReference>
<dbReference type="GO" id="GO:0003677">
    <property type="term" value="F:DNA binding"/>
    <property type="evidence" value="ECO:0007669"/>
    <property type="project" value="InterPro"/>
</dbReference>
<dbReference type="GO" id="GO:0045892">
    <property type="term" value="P:negative regulation of DNA-templated transcription"/>
    <property type="evidence" value="ECO:0007669"/>
    <property type="project" value="UniProtKB-UniRule"/>
</dbReference>
<dbReference type="Gene3D" id="3.30.450.40">
    <property type="match status" value="1"/>
</dbReference>
<dbReference type="Gene3D" id="3.30.390.60">
    <property type="entry name" value="Heat-inducible transcription repressor hrca homolog, domain 3"/>
    <property type="match status" value="1"/>
</dbReference>
<dbReference type="Gene3D" id="1.10.10.10">
    <property type="entry name" value="Winged helix-like DNA-binding domain superfamily/Winged helix DNA-binding domain"/>
    <property type="match status" value="1"/>
</dbReference>
<dbReference type="HAMAP" id="MF_00081">
    <property type="entry name" value="HrcA"/>
    <property type="match status" value="1"/>
</dbReference>
<dbReference type="InterPro" id="IPR029016">
    <property type="entry name" value="GAF-like_dom_sf"/>
</dbReference>
<dbReference type="InterPro" id="IPR002571">
    <property type="entry name" value="HrcA"/>
</dbReference>
<dbReference type="InterPro" id="IPR021153">
    <property type="entry name" value="HrcA_C"/>
</dbReference>
<dbReference type="InterPro" id="IPR036388">
    <property type="entry name" value="WH-like_DNA-bd_sf"/>
</dbReference>
<dbReference type="InterPro" id="IPR036390">
    <property type="entry name" value="WH_DNA-bd_sf"/>
</dbReference>
<dbReference type="InterPro" id="IPR005104">
    <property type="entry name" value="WHTH_HrcA_DNA-bd"/>
</dbReference>
<dbReference type="InterPro" id="IPR023120">
    <property type="entry name" value="WHTH_transcript_rep_HrcA_IDD"/>
</dbReference>
<dbReference type="NCBIfam" id="TIGR00331">
    <property type="entry name" value="hrcA"/>
    <property type="match status" value="1"/>
</dbReference>
<dbReference type="PANTHER" id="PTHR34824">
    <property type="entry name" value="HEAT-INDUCIBLE TRANSCRIPTION REPRESSOR HRCA"/>
    <property type="match status" value="1"/>
</dbReference>
<dbReference type="PANTHER" id="PTHR34824:SF1">
    <property type="entry name" value="HEAT-INDUCIBLE TRANSCRIPTION REPRESSOR HRCA"/>
    <property type="match status" value="1"/>
</dbReference>
<dbReference type="Pfam" id="PF01628">
    <property type="entry name" value="HrcA"/>
    <property type="match status" value="1"/>
</dbReference>
<dbReference type="Pfam" id="PF03444">
    <property type="entry name" value="HrcA_DNA-bdg"/>
    <property type="match status" value="1"/>
</dbReference>
<dbReference type="PIRSF" id="PIRSF005485">
    <property type="entry name" value="HrcA"/>
    <property type="match status" value="1"/>
</dbReference>
<dbReference type="SUPFAM" id="SSF55781">
    <property type="entry name" value="GAF domain-like"/>
    <property type="match status" value="1"/>
</dbReference>
<dbReference type="SUPFAM" id="SSF46785">
    <property type="entry name" value="Winged helix' DNA-binding domain"/>
    <property type="match status" value="1"/>
</dbReference>
<gene>
    <name evidence="1" type="primary">hrcA</name>
    <name type="ordered locus">lp_2029</name>
</gene>
<proteinExistence type="inferred from homology"/>
<protein>
    <recommendedName>
        <fullName evidence="1">Heat-inducible transcription repressor HrcA</fullName>
    </recommendedName>
</protein>
<name>HRCA_LACPL</name>
<evidence type="ECO:0000255" key="1">
    <source>
        <dbReference type="HAMAP-Rule" id="MF_00081"/>
    </source>
</evidence>
<reference key="1">
    <citation type="journal article" date="2003" name="Proc. Natl. Acad. Sci. U.S.A.">
        <title>Complete genome sequence of Lactobacillus plantarum WCFS1.</title>
        <authorList>
            <person name="Kleerebezem M."/>
            <person name="Boekhorst J."/>
            <person name="van Kranenburg R."/>
            <person name="Molenaar D."/>
            <person name="Kuipers O.P."/>
            <person name="Leer R."/>
            <person name="Tarchini R."/>
            <person name="Peters S.A."/>
            <person name="Sandbrink H.M."/>
            <person name="Fiers M.W.E.J."/>
            <person name="Stiekema W."/>
            <person name="Klein Lankhorst R.M."/>
            <person name="Bron P.A."/>
            <person name="Hoffer S.M."/>
            <person name="Nierop Groot M.N."/>
            <person name="Kerkhoven R."/>
            <person name="De Vries M."/>
            <person name="Ursing B."/>
            <person name="De Vos W.M."/>
            <person name="Siezen R.J."/>
        </authorList>
    </citation>
    <scope>NUCLEOTIDE SEQUENCE [LARGE SCALE GENOMIC DNA]</scope>
    <source>
        <strain>ATCC BAA-793 / NCIMB 8826 / WCFS1</strain>
    </source>
</reference>
<reference key="2">
    <citation type="journal article" date="2012" name="J. Bacteriol.">
        <title>Complete resequencing and reannotation of the Lactobacillus plantarum WCFS1 genome.</title>
        <authorList>
            <person name="Siezen R.J."/>
            <person name="Francke C."/>
            <person name="Renckens B."/>
            <person name="Boekhorst J."/>
            <person name="Wels M."/>
            <person name="Kleerebezem M."/>
            <person name="van Hijum S.A."/>
        </authorList>
    </citation>
    <scope>NUCLEOTIDE SEQUENCE [LARGE SCALE GENOMIC DNA]</scope>
    <scope>GENOME REANNOTATION</scope>
    <source>
        <strain>ATCC BAA-793 / NCIMB 8826 / WCFS1</strain>
    </source>
</reference>
<accession>Q88VL8</accession>
<accession>F9UPY6</accession>
<comment type="function">
    <text evidence="1">Negative regulator of class I heat shock genes (grpE-dnaK-dnaJ and groELS operons). Prevents heat-shock induction of these operons.</text>
</comment>
<comment type="similarity">
    <text evidence="1">Belongs to the HrcA family.</text>
</comment>
<sequence>MITLTERQSLILKAIVRDYTEGGNPVGSKSLVQELPIKVSSATIRNEMARLEDLGLIVKTHLSSGRIPSIKGYRYYVDHILKPEKVDGKDLKVIQHSLGGEFHKIDEIVAQSADILSQLTSYTTFTLRPELKDSRLSGFRLVPLGNHQVMAILVTNNGDVENQTFTIPSDITGDELEPVVRFIDDQLVGLPLQDVLRQLTHEIPLKLAQYLQDPDGFLDIFGSVLSKAASERFYVGGKLNLFNYTDQQSPKELQSLYSLLDQTDRLANVIGPPGQRIQVRIGNEITNDLLKNYSLITATYDVDQHGQGVIALLGPTAMPYSRMIGLMGAFQRELARKLLDYYRYFDE</sequence>